<gene>
    <name evidence="1" type="primary">gmhA</name>
    <name type="ordered locus">NMC2070</name>
</gene>
<keyword id="KW-0119">Carbohydrate metabolism</keyword>
<keyword id="KW-0963">Cytoplasm</keyword>
<keyword id="KW-0413">Isomerase</keyword>
<keyword id="KW-0479">Metal-binding</keyword>
<keyword id="KW-0862">Zinc</keyword>
<organism>
    <name type="scientific">Neisseria meningitidis serogroup C / serotype 2a (strain ATCC 700532 / DSM 15464 / FAM18)</name>
    <dbReference type="NCBI Taxonomy" id="272831"/>
    <lineage>
        <taxon>Bacteria</taxon>
        <taxon>Pseudomonadati</taxon>
        <taxon>Pseudomonadota</taxon>
        <taxon>Betaproteobacteria</taxon>
        <taxon>Neisseriales</taxon>
        <taxon>Neisseriaceae</taxon>
        <taxon>Neisseria</taxon>
    </lineage>
</organism>
<name>GMHA_NEIMF</name>
<feature type="chain" id="PRO_1000009083" description="Phosphoheptose isomerase">
    <location>
        <begin position="1"/>
        <end position="197"/>
    </location>
</feature>
<feature type="domain" description="SIS" evidence="1">
    <location>
        <begin position="37"/>
        <end position="197"/>
    </location>
</feature>
<feature type="binding site" evidence="1">
    <location>
        <begin position="52"/>
        <end position="54"/>
    </location>
    <ligand>
        <name>substrate</name>
    </ligand>
</feature>
<feature type="binding site" evidence="1">
    <location>
        <position position="61"/>
    </location>
    <ligand>
        <name>Zn(2+)</name>
        <dbReference type="ChEBI" id="CHEBI:29105"/>
    </ligand>
</feature>
<feature type="binding site" evidence="1">
    <location>
        <position position="65"/>
    </location>
    <ligand>
        <name>substrate</name>
    </ligand>
</feature>
<feature type="binding site" evidence="1">
    <location>
        <position position="65"/>
    </location>
    <ligand>
        <name>Zn(2+)</name>
        <dbReference type="ChEBI" id="CHEBI:29105"/>
    </ligand>
</feature>
<feature type="binding site" evidence="1">
    <location>
        <begin position="94"/>
        <end position="95"/>
    </location>
    <ligand>
        <name>substrate</name>
    </ligand>
</feature>
<feature type="binding site" evidence="1">
    <location>
        <begin position="120"/>
        <end position="122"/>
    </location>
    <ligand>
        <name>substrate</name>
    </ligand>
</feature>
<feature type="binding site" evidence="1">
    <location>
        <position position="125"/>
    </location>
    <ligand>
        <name>substrate</name>
    </ligand>
</feature>
<feature type="binding site" evidence="1">
    <location>
        <position position="175"/>
    </location>
    <ligand>
        <name>substrate</name>
    </ligand>
</feature>
<feature type="binding site" evidence="1">
    <location>
        <position position="175"/>
    </location>
    <ligand>
        <name>Zn(2+)</name>
        <dbReference type="ChEBI" id="CHEBI:29105"/>
    </ligand>
</feature>
<feature type="binding site" evidence="1">
    <location>
        <position position="183"/>
    </location>
    <ligand>
        <name>Zn(2+)</name>
        <dbReference type="ChEBI" id="CHEBI:29105"/>
    </ligand>
</feature>
<protein>
    <recommendedName>
        <fullName evidence="1">Phosphoheptose isomerase</fullName>
        <ecNumber evidence="1">5.3.1.28</ecNumber>
    </recommendedName>
    <alternativeName>
        <fullName evidence="1">Sedoheptulose 7-phosphate isomerase</fullName>
    </alternativeName>
</protein>
<accession>A1KWG6</accession>
<evidence type="ECO:0000255" key="1">
    <source>
        <dbReference type="HAMAP-Rule" id="MF_00067"/>
    </source>
</evidence>
<dbReference type="EC" id="5.3.1.28" evidence="1"/>
<dbReference type="EMBL" id="AM421808">
    <property type="protein sequence ID" value="CAM11223.1"/>
    <property type="molecule type" value="Genomic_DNA"/>
</dbReference>
<dbReference type="RefSeq" id="WP_002217774.1">
    <property type="nucleotide sequence ID" value="NC_008767.1"/>
</dbReference>
<dbReference type="SMR" id="A1KWG6"/>
<dbReference type="KEGG" id="nmc:NMC2070"/>
<dbReference type="HOGENOM" id="CLU_080999_4_0_4"/>
<dbReference type="UniPathway" id="UPA00041">
    <property type="reaction ID" value="UER00436"/>
</dbReference>
<dbReference type="Proteomes" id="UP000002286">
    <property type="component" value="Chromosome"/>
</dbReference>
<dbReference type="GO" id="GO:0005737">
    <property type="term" value="C:cytoplasm"/>
    <property type="evidence" value="ECO:0007669"/>
    <property type="project" value="UniProtKB-SubCell"/>
</dbReference>
<dbReference type="GO" id="GO:0097367">
    <property type="term" value="F:carbohydrate derivative binding"/>
    <property type="evidence" value="ECO:0007669"/>
    <property type="project" value="InterPro"/>
</dbReference>
<dbReference type="GO" id="GO:0008968">
    <property type="term" value="F:D-sedoheptulose 7-phosphate isomerase activity"/>
    <property type="evidence" value="ECO:0007669"/>
    <property type="project" value="UniProtKB-UniRule"/>
</dbReference>
<dbReference type="GO" id="GO:0008270">
    <property type="term" value="F:zinc ion binding"/>
    <property type="evidence" value="ECO:0007669"/>
    <property type="project" value="UniProtKB-UniRule"/>
</dbReference>
<dbReference type="GO" id="GO:0005975">
    <property type="term" value="P:carbohydrate metabolic process"/>
    <property type="evidence" value="ECO:0007669"/>
    <property type="project" value="UniProtKB-UniRule"/>
</dbReference>
<dbReference type="GO" id="GO:2001061">
    <property type="term" value="P:D-glycero-D-manno-heptose 7-phosphate biosynthetic process"/>
    <property type="evidence" value="ECO:0007669"/>
    <property type="project" value="UniProtKB-UniPathway"/>
</dbReference>
<dbReference type="CDD" id="cd05006">
    <property type="entry name" value="SIS_GmhA"/>
    <property type="match status" value="1"/>
</dbReference>
<dbReference type="Gene3D" id="3.40.50.10490">
    <property type="entry name" value="Glucose-6-phosphate isomerase like protein, domain 1"/>
    <property type="match status" value="1"/>
</dbReference>
<dbReference type="HAMAP" id="MF_00067">
    <property type="entry name" value="GmhA"/>
    <property type="match status" value="1"/>
</dbReference>
<dbReference type="InterPro" id="IPR035461">
    <property type="entry name" value="GmhA/DiaA"/>
</dbReference>
<dbReference type="InterPro" id="IPR004515">
    <property type="entry name" value="Phosphoheptose_Isoase"/>
</dbReference>
<dbReference type="InterPro" id="IPR001347">
    <property type="entry name" value="SIS_dom"/>
</dbReference>
<dbReference type="InterPro" id="IPR046348">
    <property type="entry name" value="SIS_dom_sf"/>
</dbReference>
<dbReference type="InterPro" id="IPR050099">
    <property type="entry name" value="SIS_GmhA/DiaA_subfam"/>
</dbReference>
<dbReference type="NCBIfam" id="TIGR00441">
    <property type="entry name" value="gmhA"/>
    <property type="match status" value="1"/>
</dbReference>
<dbReference type="NCBIfam" id="NF010546">
    <property type="entry name" value="PRK13936.1"/>
    <property type="match status" value="1"/>
</dbReference>
<dbReference type="PANTHER" id="PTHR30390:SF6">
    <property type="entry name" value="DNAA INITIATOR-ASSOCIATING PROTEIN DIAA"/>
    <property type="match status" value="1"/>
</dbReference>
<dbReference type="PANTHER" id="PTHR30390">
    <property type="entry name" value="SEDOHEPTULOSE 7-PHOSPHATE ISOMERASE / DNAA INITIATOR-ASSOCIATING FACTOR FOR REPLICATION INITIATION"/>
    <property type="match status" value="1"/>
</dbReference>
<dbReference type="Pfam" id="PF13580">
    <property type="entry name" value="SIS_2"/>
    <property type="match status" value="1"/>
</dbReference>
<dbReference type="SUPFAM" id="SSF53697">
    <property type="entry name" value="SIS domain"/>
    <property type="match status" value="1"/>
</dbReference>
<dbReference type="PROSITE" id="PS51464">
    <property type="entry name" value="SIS"/>
    <property type="match status" value="1"/>
</dbReference>
<sequence length="197" mass="20998">MTTLQERVAAHFAESIRAKQEAGKVLVEPTVQAAELMLQCLMNDGKILACGNGGSAADAQHFAAEMTGRFEKERMELAAVALTTDTSALTAIGNDYGFNHVFSKQVRALGRAGDILVGISTSGNSANVIEAIKAAHERDMHVIALTGRDGGKIAAILKDTDVLLNVPHPRTARIQENHILLIHAICDCIDSVLLEGM</sequence>
<comment type="function">
    <text evidence="1">Catalyzes the isomerization of sedoheptulose 7-phosphate in D-glycero-D-manno-heptose 7-phosphate.</text>
</comment>
<comment type="catalytic activity">
    <reaction evidence="1">
        <text>2 D-sedoheptulose 7-phosphate = D-glycero-alpha-D-manno-heptose 7-phosphate + D-glycero-beta-D-manno-heptose 7-phosphate</text>
        <dbReference type="Rhea" id="RHEA:27489"/>
        <dbReference type="ChEBI" id="CHEBI:57483"/>
        <dbReference type="ChEBI" id="CHEBI:60203"/>
        <dbReference type="ChEBI" id="CHEBI:60204"/>
        <dbReference type="EC" id="5.3.1.28"/>
    </reaction>
</comment>
<comment type="cofactor">
    <cofactor evidence="1">
        <name>Zn(2+)</name>
        <dbReference type="ChEBI" id="CHEBI:29105"/>
    </cofactor>
    <text evidence="1">Binds 1 zinc ion per subunit.</text>
</comment>
<comment type="pathway">
    <text evidence="1">Carbohydrate biosynthesis; D-glycero-D-manno-heptose 7-phosphate biosynthesis; D-glycero-alpha-D-manno-heptose 7-phosphate and D-glycero-beta-D-manno-heptose 7-phosphate from sedoheptulose 7-phosphate: step 1/1.</text>
</comment>
<comment type="subunit">
    <text evidence="1">Homotetramer.</text>
</comment>
<comment type="subcellular location">
    <subcellularLocation>
        <location evidence="1">Cytoplasm</location>
    </subcellularLocation>
</comment>
<comment type="miscellaneous">
    <text evidence="1">The reaction produces a racemic mixture of D-glycero-alpha-D-manno-heptose 7-phosphate and D-glycero-beta-D-manno-heptose 7-phosphate.</text>
</comment>
<comment type="similarity">
    <text evidence="1">Belongs to the SIS family. GmhA subfamily.</text>
</comment>
<reference key="1">
    <citation type="journal article" date="2007" name="PLoS Genet.">
        <title>Meningococcal genetic variation mechanisms viewed through comparative analysis of serogroup C strain FAM18.</title>
        <authorList>
            <person name="Bentley S.D."/>
            <person name="Vernikos G.S."/>
            <person name="Snyder L.A.S."/>
            <person name="Churcher C."/>
            <person name="Arrowsmith C."/>
            <person name="Chillingworth T."/>
            <person name="Cronin A."/>
            <person name="Davis P.H."/>
            <person name="Holroyd N.E."/>
            <person name="Jagels K."/>
            <person name="Maddison M."/>
            <person name="Moule S."/>
            <person name="Rabbinowitsch E."/>
            <person name="Sharp S."/>
            <person name="Unwin L."/>
            <person name="Whitehead S."/>
            <person name="Quail M.A."/>
            <person name="Achtman M."/>
            <person name="Barrell B.G."/>
            <person name="Saunders N.J."/>
            <person name="Parkhill J."/>
        </authorList>
    </citation>
    <scope>NUCLEOTIDE SEQUENCE [LARGE SCALE GENOMIC DNA]</scope>
    <source>
        <strain>ATCC 700532 / DSM 15464 / FAM18</strain>
    </source>
</reference>
<proteinExistence type="inferred from homology"/>